<keyword id="KW-0150">Chloroplast</keyword>
<keyword id="KW-0934">Plastid</keyword>
<keyword id="KW-0687">Ribonucleoprotein</keyword>
<keyword id="KW-0689">Ribosomal protein</keyword>
<reference key="1">
    <citation type="journal article" date="2000" name="DNA Res.">
        <title>Complete structure of the chloroplast genome of a legume, Lotus japonicus.</title>
        <authorList>
            <person name="Kato T."/>
            <person name="Kaneko T."/>
            <person name="Sato S."/>
            <person name="Nakamura Y."/>
            <person name="Tabata S."/>
        </authorList>
    </citation>
    <scope>NUCLEOTIDE SEQUENCE [LARGE SCALE GENOMIC DNA]</scope>
    <source>
        <strain>cv. Miyakojima MG-20</strain>
    </source>
</reference>
<comment type="subcellular location">
    <subcellularLocation>
        <location>Plastid</location>
        <location>Chloroplast</location>
    </subcellularLocation>
</comment>
<comment type="similarity">
    <text evidence="1">Belongs to the bacterial ribosomal protein bL32 family.</text>
</comment>
<gene>
    <name evidence="1" type="primary">rpl32</name>
</gene>
<name>RK32_LOTJA</name>
<sequence>MAVPKKRTSISKKLIRKNFWKKRGYWTALKAFSLAQSIFTGNSKSFFCNK</sequence>
<feature type="chain" id="PRO_0000172461" description="Large ribosomal subunit protein bL32c">
    <location>
        <begin position="1"/>
        <end position="50"/>
    </location>
</feature>
<evidence type="ECO:0000255" key="1">
    <source>
        <dbReference type="HAMAP-Rule" id="MF_00340"/>
    </source>
</evidence>
<evidence type="ECO:0000305" key="2"/>
<proteinExistence type="inferred from homology"/>
<geneLocation type="chloroplast"/>
<protein>
    <recommendedName>
        <fullName evidence="1">Large ribosomal subunit protein bL32c</fullName>
    </recommendedName>
    <alternativeName>
        <fullName evidence="2">50S ribosomal protein L32, chloroplastic</fullName>
    </alternativeName>
</protein>
<accession>Q9BBP5</accession>
<organism>
    <name type="scientific">Lotus japonicus</name>
    <name type="common">Lotus corniculatus var. japonicus</name>
    <dbReference type="NCBI Taxonomy" id="34305"/>
    <lineage>
        <taxon>Eukaryota</taxon>
        <taxon>Viridiplantae</taxon>
        <taxon>Streptophyta</taxon>
        <taxon>Embryophyta</taxon>
        <taxon>Tracheophyta</taxon>
        <taxon>Spermatophyta</taxon>
        <taxon>Magnoliopsida</taxon>
        <taxon>eudicotyledons</taxon>
        <taxon>Gunneridae</taxon>
        <taxon>Pentapetalae</taxon>
        <taxon>rosids</taxon>
        <taxon>fabids</taxon>
        <taxon>Fabales</taxon>
        <taxon>Fabaceae</taxon>
        <taxon>Papilionoideae</taxon>
        <taxon>50 kb inversion clade</taxon>
        <taxon>NPAAA clade</taxon>
        <taxon>Hologalegina</taxon>
        <taxon>robinioid clade</taxon>
        <taxon>Loteae</taxon>
        <taxon>Lotus</taxon>
    </lineage>
</organism>
<dbReference type="EMBL" id="AP002983">
    <property type="protein sequence ID" value="BAB33243.1"/>
    <property type="molecule type" value="Genomic_DNA"/>
</dbReference>
<dbReference type="RefSeq" id="NP_084843.1">
    <property type="nucleotide sequence ID" value="NC_002694.1"/>
</dbReference>
<dbReference type="SMR" id="Q9BBP5"/>
<dbReference type="GeneID" id="802916"/>
<dbReference type="OMA" id="IRKNFWK"/>
<dbReference type="GO" id="GO:0009507">
    <property type="term" value="C:chloroplast"/>
    <property type="evidence" value="ECO:0007669"/>
    <property type="project" value="UniProtKB-SubCell"/>
</dbReference>
<dbReference type="GO" id="GO:0015934">
    <property type="term" value="C:large ribosomal subunit"/>
    <property type="evidence" value="ECO:0007669"/>
    <property type="project" value="InterPro"/>
</dbReference>
<dbReference type="GO" id="GO:0003735">
    <property type="term" value="F:structural constituent of ribosome"/>
    <property type="evidence" value="ECO:0007669"/>
    <property type="project" value="InterPro"/>
</dbReference>
<dbReference type="GO" id="GO:0006412">
    <property type="term" value="P:translation"/>
    <property type="evidence" value="ECO:0007669"/>
    <property type="project" value="UniProtKB-UniRule"/>
</dbReference>
<dbReference type="HAMAP" id="MF_00340">
    <property type="entry name" value="Ribosomal_bL32"/>
    <property type="match status" value="1"/>
</dbReference>
<dbReference type="InterPro" id="IPR002677">
    <property type="entry name" value="Ribosomal_bL32"/>
</dbReference>
<dbReference type="InterPro" id="IPR044958">
    <property type="entry name" value="Ribosomal_bL32_plant/cyanobact"/>
</dbReference>
<dbReference type="PANTHER" id="PTHR36083">
    <property type="entry name" value="50S RIBOSOMAL PROTEIN L32, CHLOROPLASTIC"/>
    <property type="match status" value="1"/>
</dbReference>
<dbReference type="PANTHER" id="PTHR36083:SF1">
    <property type="entry name" value="LARGE RIBOSOMAL SUBUNIT PROTEIN BL32C"/>
    <property type="match status" value="1"/>
</dbReference>